<sequence length="253" mass="28167">MENSMMFISRSLRRPVTALNCNLQSVRTVIYLHKGPRINGLRRDPESYLRNPSGVLFTEVNAKECQDKVRSILQLPKYGINLSNELILQCLTHKSFAHGSKPYNEKLNLLGAQFLKLQTCIHSLKNGSPAESCENGQLSLQFSNLGTKFAKELTSKNTACTFVKLHNLDPFIFWKMRDPIKDGHINGETTIFASVLNAFIGAILSTNGSEKAAKFIQGSLLDKEDLHSLVNIANENVASAKAKISDKENKAFL</sequence>
<reference key="1">
    <citation type="journal article" date="1997" name="Nature">
        <title>The nucleotide sequence of Saccharomyces cerevisiae chromosome XII.</title>
        <authorList>
            <person name="Johnston M."/>
            <person name="Hillier L.W."/>
            <person name="Riles L."/>
            <person name="Albermann K."/>
            <person name="Andre B."/>
            <person name="Ansorge W."/>
            <person name="Benes V."/>
            <person name="Brueckner M."/>
            <person name="Delius H."/>
            <person name="Dubois E."/>
            <person name="Duesterhoeft A."/>
            <person name="Entian K.-D."/>
            <person name="Floeth M."/>
            <person name="Goffeau A."/>
            <person name="Hebling U."/>
            <person name="Heumann K."/>
            <person name="Heuss-Neitzel D."/>
            <person name="Hilbert H."/>
            <person name="Hilger F."/>
            <person name="Kleine K."/>
            <person name="Koetter P."/>
            <person name="Louis E.J."/>
            <person name="Messenguy F."/>
            <person name="Mewes H.-W."/>
            <person name="Miosga T."/>
            <person name="Moestl D."/>
            <person name="Mueller-Auer S."/>
            <person name="Nentwich U."/>
            <person name="Obermaier B."/>
            <person name="Piravandi E."/>
            <person name="Pohl T.M."/>
            <person name="Portetelle D."/>
            <person name="Purnelle B."/>
            <person name="Rechmann S."/>
            <person name="Rieger M."/>
            <person name="Rinke M."/>
            <person name="Rose M."/>
            <person name="Scharfe M."/>
            <person name="Scherens B."/>
            <person name="Scholler P."/>
            <person name="Schwager C."/>
            <person name="Schwarz S."/>
            <person name="Underwood A.P."/>
            <person name="Urrestarazu L.A."/>
            <person name="Vandenbol M."/>
            <person name="Verhasselt P."/>
            <person name="Vierendeels F."/>
            <person name="Voet M."/>
            <person name="Volckaert G."/>
            <person name="Voss H."/>
            <person name="Wambutt R."/>
            <person name="Wedler E."/>
            <person name="Wedler H."/>
            <person name="Zimmermann F.K."/>
            <person name="Zollner A."/>
            <person name="Hani J."/>
            <person name="Hoheisel J.D."/>
        </authorList>
    </citation>
    <scope>NUCLEOTIDE SEQUENCE [LARGE SCALE GENOMIC DNA]</scope>
    <source>
        <strain>ATCC 204508 / S288c</strain>
    </source>
</reference>
<reference key="2">
    <citation type="journal article" date="2014" name="G3 (Bethesda)">
        <title>The reference genome sequence of Saccharomyces cerevisiae: Then and now.</title>
        <authorList>
            <person name="Engel S.R."/>
            <person name="Dietrich F.S."/>
            <person name="Fisk D.G."/>
            <person name="Binkley G."/>
            <person name="Balakrishnan R."/>
            <person name="Costanzo M.C."/>
            <person name="Dwight S.S."/>
            <person name="Hitz B.C."/>
            <person name="Karra K."/>
            <person name="Nash R.S."/>
            <person name="Weng S."/>
            <person name="Wong E.D."/>
            <person name="Lloyd P."/>
            <person name="Skrzypek M.S."/>
            <person name="Miyasato S.R."/>
            <person name="Simison M."/>
            <person name="Cherry J.M."/>
        </authorList>
    </citation>
    <scope>GENOME REANNOTATION</scope>
    <source>
        <strain>ATCC 204508 / S288c</strain>
    </source>
</reference>
<reference key="3">
    <citation type="journal article" date="1997" name="Eur. J. Biochem.">
        <title>Identification and characterization of the genes for mitochondrial ribosomal proteins of Saccharomyces cerevisiae.</title>
        <authorList>
            <person name="Kitakawa M."/>
            <person name="Graack H.-R."/>
            <person name="Grohmann L."/>
            <person name="Goldschmidt-Reisin S."/>
            <person name="Herfurth E."/>
            <person name="Wittmann-Liebold B."/>
            <person name="Nishimura T."/>
            <person name="Isono K."/>
        </authorList>
    </citation>
    <scope>NUCLEOTIDE SEQUENCE [GENOMIC DNA] OF 1-46</scope>
    <scope>SUBUNIT</scope>
    <source>
        <strain>07173</strain>
    </source>
</reference>
<reference key="4">
    <citation type="journal article" date="1991" name="FEBS Lett.">
        <title>Extended N-terminal sequencing of proteins of the large ribosomal subunit from yeast mitochondria.</title>
        <authorList>
            <person name="Grohmann L."/>
            <person name="Graack H.-R."/>
            <person name="Kruft V."/>
            <person name="Choli T."/>
            <person name="Goldschmidt-Reisin S."/>
            <person name="Kitakawa M."/>
        </authorList>
    </citation>
    <scope>PROTEIN SEQUENCE OF 29-66</scope>
    <scope>SUBUNIT</scope>
    <source>
        <strain>07173</strain>
    </source>
</reference>
<reference key="5">
    <citation type="journal article" date="2002" name="Eur. J. Biochem.">
        <title>Tag-mediated isolation of yeast mitochondrial ribosome and mass spectrometric identification of its new components.</title>
        <authorList>
            <person name="Gan X."/>
            <person name="Kitakawa M."/>
            <person name="Yoshino K."/>
            <person name="Oshiro N."/>
            <person name="Yonezawa K."/>
            <person name="Isono K."/>
        </authorList>
    </citation>
    <scope>IDENTIFICATION IN THE MITOCHONDRIAL RIBOSOMAL LARGE COMPLEX</scope>
    <scope>IDENTIFICATION BY MASS SPECTROMETRY</scope>
</reference>
<reference key="6">
    <citation type="journal article" date="2003" name="Nature">
        <title>Global analysis of protein localization in budding yeast.</title>
        <authorList>
            <person name="Huh W.-K."/>
            <person name="Falvo J.V."/>
            <person name="Gerke L.C."/>
            <person name="Carroll A.S."/>
            <person name="Howson R.W."/>
            <person name="Weissman J.S."/>
            <person name="O'Shea E.K."/>
        </authorList>
    </citation>
    <scope>SUBCELLULAR LOCATION [LARGE SCALE ANALYSIS]</scope>
</reference>
<reference key="7">
    <citation type="journal article" date="2003" name="Nature">
        <title>Global analysis of protein expression in yeast.</title>
        <authorList>
            <person name="Ghaemmaghami S."/>
            <person name="Huh W.-K."/>
            <person name="Bower K."/>
            <person name="Howson R.W."/>
            <person name="Belle A."/>
            <person name="Dephoure N."/>
            <person name="O'Shea E.K."/>
            <person name="Weissman J.S."/>
        </authorList>
    </citation>
    <scope>LEVEL OF PROTEIN EXPRESSION [LARGE SCALE ANALYSIS]</scope>
</reference>
<reference key="8">
    <citation type="journal article" date="2003" name="Proc. Natl. Acad. Sci. U.S.A.">
        <title>The proteome of Saccharomyces cerevisiae mitochondria.</title>
        <authorList>
            <person name="Sickmann A."/>
            <person name="Reinders J."/>
            <person name="Wagner Y."/>
            <person name="Joppich C."/>
            <person name="Zahedi R.P."/>
            <person name="Meyer H.E."/>
            <person name="Schoenfisch B."/>
            <person name="Perschil I."/>
            <person name="Chacinska A."/>
            <person name="Guiard B."/>
            <person name="Rehling P."/>
            <person name="Pfanner N."/>
            <person name="Meisinger C."/>
        </authorList>
    </citation>
    <scope>SUBCELLULAR LOCATION [LARGE SCALE ANALYSIS]</scope>
    <source>
        <strain>ATCC 76625 / YPH499</strain>
    </source>
</reference>
<reference key="9">
    <citation type="journal article" date="2015" name="Nat. Commun.">
        <title>Organization of the mitochondrial translation machinery studied in situ by cryoelectron tomography.</title>
        <authorList>
            <person name="Pfeffer S."/>
            <person name="Woellhaf M.W."/>
            <person name="Herrmann J.M."/>
            <person name="Forster F."/>
        </authorList>
    </citation>
    <scope>SUBCELLULAR LOCATION</scope>
</reference>
<reference key="10">
    <citation type="journal article" date="2014" name="Science">
        <title>Structure of the yeast mitochondrial large ribosomal subunit.</title>
        <authorList>
            <person name="Amunts A."/>
            <person name="Brown A."/>
            <person name="Bai X.C."/>
            <person name="Llacer J.L."/>
            <person name="Hussain T."/>
            <person name="Emsley P."/>
            <person name="Long F."/>
            <person name="Murshudov G."/>
            <person name="Scheres S.H."/>
            <person name="Ramakrishnan V."/>
        </authorList>
    </citation>
    <scope>STRUCTURE BY ELECTRON MICROSCOPY (3.20 ANGSTROMS)</scope>
    <scope>SUBUNIT</scope>
</reference>
<evidence type="ECO:0000269" key="1">
    <source>
    </source>
</evidence>
<evidence type="ECO:0000269" key="2">
    <source>
    </source>
</evidence>
<evidence type="ECO:0000269" key="3">
    <source>
    </source>
</evidence>
<evidence type="ECO:0000269" key="4">
    <source>
    </source>
</evidence>
<evidence type="ECO:0000269" key="5">
    <source>
    </source>
</evidence>
<evidence type="ECO:0000269" key="6">
    <source>
    </source>
</evidence>
<evidence type="ECO:0000269" key="7">
    <source>
    </source>
</evidence>
<evidence type="ECO:0000269" key="8">
    <source>
    </source>
</evidence>
<evidence type="ECO:0000303" key="9">
    <source>
    </source>
</evidence>
<evidence type="ECO:0000305" key="10"/>
<evidence type="ECO:0000305" key="11">
    <source>
    </source>
</evidence>
<evidence type="ECO:0000305" key="12">
    <source>
    </source>
</evidence>
<protein>
    <recommendedName>
        <fullName evidence="9">Large ribosomal subunit protein mL57</fullName>
    </recommendedName>
    <alternativeName>
        <fullName>54S ribosomal protein L15, mitochondrial</fullName>
    </alternativeName>
    <alternativeName>
        <fullName>YmL15</fullName>
    </alternativeName>
</protein>
<feature type="transit peptide" description="Mitochondrion" evidence="5">
    <location>
        <begin position="1"/>
        <end position="28"/>
    </location>
</feature>
<feature type="chain" id="PRO_0000030572" description="Large ribosomal subunit protein mL57">
    <location>
        <begin position="29"/>
        <end position="253"/>
    </location>
</feature>
<feature type="sequence conflict" description="In Ref. 4; AA sequence." evidence="10" ref="4">
    <original>T</original>
    <variation>S</variation>
    <location>
        <position position="58"/>
    </location>
</feature>
<keyword id="KW-0002">3D-structure</keyword>
<keyword id="KW-0903">Direct protein sequencing</keyword>
<keyword id="KW-0496">Mitochondrion</keyword>
<keyword id="KW-1185">Reference proteome</keyword>
<keyword id="KW-0687">Ribonucleoprotein</keyword>
<keyword id="KW-0689">Ribosomal protein</keyword>
<keyword id="KW-0809">Transit peptide</keyword>
<dbReference type="EMBL" id="U20618">
    <property type="protein sequence ID" value="AAB64533.1"/>
    <property type="molecule type" value="Genomic_DNA"/>
</dbReference>
<dbReference type="EMBL" id="Y09436">
    <property type="protein sequence ID" value="CAA70586.1"/>
    <property type="molecule type" value="Genomic_DNA"/>
</dbReference>
<dbReference type="EMBL" id="BK006945">
    <property type="protein sequence ID" value="DAA09622.1"/>
    <property type="molecule type" value="Genomic_DNA"/>
</dbReference>
<dbReference type="PIR" id="S72159">
    <property type="entry name" value="S72159"/>
</dbReference>
<dbReference type="RefSeq" id="NP_013416.2">
    <property type="nucleotide sequence ID" value="NM_001182201.1"/>
</dbReference>
<dbReference type="PDB" id="3J6B">
    <property type="method" value="EM"/>
    <property type="resolution" value="3.20 A"/>
    <property type="chains" value="9=1-253"/>
</dbReference>
<dbReference type="PDB" id="5MRC">
    <property type="method" value="EM"/>
    <property type="resolution" value="3.25 A"/>
    <property type="chains" value="9=29-243"/>
</dbReference>
<dbReference type="PDB" id="5MRE">
    <property type="method" value="EM"/>
    <property type="resolution" value="3.75 A"/>
    <property type="chains" value="9=29-243"/>
</dbReference>
<dbReference type="PDB" id="5MRF">
    <property type="method" value="EM"/>
    <property type="resolution" value="4.97 A"/>
    <property type="chains" value="9=29-243"/>
</dbReference>
<dbReference type="PDBsum" id="3J6B"/>
<dbReference type="PDBsum" id="5MRC"/>
<dbReference type="PDBsum" id="5MRE"/>
<dbReference type="PDBsum" id="5MRF"/>
<dbReference type="EMDB" id="EMD-3551"/>
<dbReference type="EMDB" id="EMD-3552"/>
<dbReference type="EMDB" id="EMD-3553"/>
<dbReference type="SMR" id="P36523"/>
<dbReference type="BioGRID" id="31577">
    <property type="interactions" value="140"/>
</dbReference>
<dbReference type="ComplexPortal" id="CPX-1602">
    <property type="entry name" value="54S mitochondrial large ribosomal subunit"/>
</dbReference>
<dbReference type="DIP" id="DIP-6779N"/>
<dbReference type="FunCoup" id="P36523">
    <property type="interactions" value="240"/>
</dbReference>
<dbReference type="IntAct" id="P36523">
    <property type="interactions" value="63"/>
</dbReference>
<dbReference type="MINT" id="P36523"/>
<dbReference type="STRING" id="4932.YLR312W-A"/>
<dbReference type="PaxDb" id="4932-YLR312W-A"/>
<dbReference type="PeptideAtlas" id="P36523"/>
<dbReference type="EnsemblFungi" id="YLR312W-A_mRNA">
    <property type="protein sequence ID" value="YLR312W-A"/>
    <property type="gene ID" value="YLR312W-A"/>
</dbReference>
<dbReference type="GeneID" id="851022"/>
<dbReference type="KEGG" id="sce:YLR312W-A"/>
<dbReference type="AGR" id="SGD:S000004304"/>
<dbReference type="SGD" id="S000004304">
    <property type="gene designation" value="MRPL15"/>
</dbReference>
<dbReference type="VEuPathDB" id="FungiDB:YLR312W-A"/>
<dbReference type="eggNOG" id="ENOG502RXWY">
    <property type="taxonomic scope" value="Eukaryota"/>
</dbReference>
<dbReference type="HOGENOM" id="CLU_088025_0_0_1"/>
<dbReference type="InParanoid" id="P36523"/>
<dbReference type="OMA" id="LHKGPRV"/>
<dbReference type="OrthoDB" id="2281895at2759"/>
<dbReference type="BioCyc" id="YEAST:G3O-32398-MONOMER"/>
<dbReference type="BioGRID-ORCS" id="851022">
    <property type="hits" value="8 hits in 10 CRISPR screens"/>
</dbReference>
<dbReference type="PRO" id="PR:P36523"/>
<dbReference type="Proteomes" id="UP000002311">
    <property type="component" value="Chromosome XII"/>
</dbReference>
<dbReference type="RNAct" id="P36523">
    <property type="molecule type" value="protein"/>
</dbReference>
<dbReference type="GO" id="GO:0005743">
    <property type="term" value="C:mitochondrial inner membrane"/>
    <property type="evidence" value="ECO:0000303"/>
    <property type="project" value="ComplexPortal"/>
</dbReference>
<dbReference type="GO" id="GO:0005762">
    <property type="term" value="C:mitochondrial large ribosomal subunit"/>
    <property type="evidence" value="ECO:0000314"/>
    <property type="project" value="SGD"/>
</dbReference>
<dbReference type="GO" id="GO:0005739">
    <property type="term" value="C:mitochondrion"/>
    <property type="evidence" value="ECO:0007005"/>
    <property type="project" value="SGD"/>
</dbReference>
<dbReference type="GO" id="GO:0004525">
    <property type="term" value="F:ribonuclease III activity"/>
    <property type="evidence" value="ECO:0007669"/>
    <property type="project" value="InterPro"/>
</dbReference>
<dbReference type="GO" id="GO:0003735">
    <property type="term" value="F:structural constituent of ribosome"/>
    <property type="evidence" value="ECO:0000314"/>
    <property type="project" value="SGD"/>
</dbReference>
<dbReference type="GO" id="GO:0032543">
    <property type="term" value="P:mitochondrial translation"/>
    <property type="evidence" value="ECO:0000303"/>
    <property type="project" value="ComplexPortal"/>
</dbReference>
<dbReference type="GO" id="GO:0006396">
    <property type="term" value="P:RNA processing"/>
    <property type="evidence" value="ECO:0007669"/>
    <property type="project" value="InterPro"/>
</dbReference>
<dbReference type="CDD" id="cd00593">
    <property type="entry name" value="RIBOc"/>
    <property type="match status" value="1"/>
</dbReference>
<dbReference type="FunFam" id="1.10.1520.10:FF:000029">
    <property type="entry name" value="Mrpl15p"/>
    <property type="match status" value="1"/>
</dbReference>
<dbReference type="Gene3D" id="1.10.1520.10">
    <property type="entry name" value="Ribonuclease III domain"/>
    <property type="match status" value="1"/>
</dbReference>
<dbReference type="InterPro" id="IPR040030">
    <property type="entry name" value="Ribosomal_mL57"/>
</dbReference>
<dbReference type="InterPro" id="IPR000999">
    <property type="entry name" value="RNase_III_dom"/>
</dbReference>
<dbReference type="InterPro" id="IPR036389">
    <property type="entry name" value="RNase_III_sf"/>
</dbReference>
<dbReference type="PANTHER" id="PTHR28160">
    <property type="entry name" value="54S RIBOSOMAL PROTEIN L15, MITOCHONDRIAL"/>
    <property type="match status" value="1"/>
</dbReference>
<dbReference type="PANTHER" id="PTHR28160:SF1">
    <property type="entry name" value="LARGE RIBOSOMAL SUBUNIT PROTEIN ML57"/>
    <property type="match status" value="1"/>
</dbReference>
<dbReference type="Pfam" id="PF14622">
    <property type="entry name" value="Ribonucleas_3_3"/>
    <property type="match status" value="1"/>
</dbReference>
<dbReference type="SMART" id="SM00535">
    <property type="entry name" value="RIBOc"/>
    <property type="match status" value="1"/>
</dbReference>
<dbReference type="SUPFAM" id="SSF69065">
    <property type="entry name" value="RNase III domain-like"/>
    <property type="match status" value="1"/>
</dbReference>
<gene>
    <name type="primary">MRPL15</name>
    <name type="ordered locus">YLR312W-A</name>
    <name type="ORF">YLR312BW</name>
</gene>
<name>RM15_YEAST</name>
<comment type="function">
    <text evidence="11 12">Component of the mitochondrial ribosome (mitoribosome), a dedicated translation machinery responsible for the synthesis of mitochondrial genome-encoded proteins, including at least some of the essential transmembrane subunits of the mitochondrial respiratory chain. The mitoribosomes are attached to the mitochondrial inner membrane and translation products are cotranslationally integrated into the membrane.</text>
</comment>
<comment type="subunit">
    <text evidence="1 5 6 8">Component of the mitochondrial large ribosomal subunit (mt-LSU). Mature yeast 74S mitochondrial ribosomes consist of a small (37S) and a large (54S) subunit. The 37S small subunit contains a 15S ribosomal RNA (15S mt-rRNA) and 34 different proteins. The 54S large subunit contains a 21S rRNA (21S mt-rRNA) and 46 different proteins. mL57 forms a heterodimer with mL44 and stabilizes rRNA expansion segments 1/2 at a membrane-facing protuberance close to the point of attachment of the ribosome to the translocon in the membrane.</text>
</comment>
<comment type="subcellular location">
    <subcellularLocation>
        <location evidence="2 4">Mitochondrion</location>
    </subcellularLocation>
    <text evidence="7">Mitoribosomes are tethered to the mitochondrial inner membrane and spatially aligned with the membrane insertion machinery through two distinct membrane contact sites, formed by the 21S rRNA expansion segment 96-ES1 and the inner membrane protein MBA1.</text>
</comment>
<comment type="miscellaneous">
    <text evidence="3">Present with 6500 molecules/cell in log phase SD medium.</text>
</comment>
<comment type="similarity">
    <text evidence="10">Belongs to the ribonuclease III family. Mitochondrion-specific ribosomal protein mL57 subfamily.</text>
</comment>
<proteinExistence type="evidence at protein level"/>
<organism>
    <name type="scientific">Saccharomyces cerevisiae (strain ATCC 204508 / S288c)</name>
    <name type="common">Baker's yeast</name>
    <dbReference type="NCBI Taxonomy" id="559292"/>
    <lineage>
        <taxon>Eukaryota</taxon>
        <taxon>Fungi</taxon>
        <taxon>Dikarya</taxon>
        <taxon>Ascomycota</taxon>
        <taxon>Saccharomycotina</taxon>
        <taxon>Saccharomycetes</taxon>
        <taxon>Saccharomycetales</taxon>
        <taxon>Saccharomycetaceae</taxon>
        <taxon>Saccharomyces</taxon>
    </lineage>
</organism>
<accession>P36523</accession>
<accession>D6VYV6</accession>
<accession>O13551</accession>
<accession>P89101</accession>